<name>RL30_STAAW</name>
<evidence type="ECO:0000255" key="1">
    <source>
        <dbReference type="HAMAP-Rule" id="MF_01371"/>
    </source>
</evidence>
<evidence type="ECO:0000305" key="2"/>
<sequence>MAKLQITLTRSVIGRPETQRKTVEALGLKKTNSSVVVEDNPAIRGQINKVKHLVTVEEK</sequence>
<keyword id="KW-0002">3D-structure</keyword>
<keyword id="KW-0687">Ribonucleoprotein</keyword>
<keyword id="KW-0689">Ribosomal protein</keyword>
<accession>P0A0G1</accession>
<accession>O06444</accession>
<proteinExistence type="evidence at protein level"/>
<protein>
    <recommendedName>
        <fullName evidence="1">Large ribosomal subunit protein uL30</fullName>
    </recommendedName>
    <alternativeName>
        <fullName evidence="2">50S ribosomal protein L30</fullName>
    </alternativeName>
</protein>
<organism>
    <name type="scientific">Staphylococcus aureus (strain MW2)</name>
    <dbReference type="NCBI Taxonomy" id="196620"/>
    <lineage>
        <taxon>Bacteria</taxon>
        <taxon>Bacillati</taxon>
        <taxon>Bacillota</taxon>
        <taxon>Bacilli</taxon>
        <taxon>Bacillales</taxon>
        <taxon>Staphylococcaceae</taxon>
        <taxon>Staphylococcus</taxon>
    </lineage>
</organism>
<comment type="subunit">
    <text evidence="1">Part of the 50S ribosomal subunit.</text>
</comment>
<comment type="similarity">
    <text evidence="1">Belongs to the universal ribosomal protein uL30 family.</text>
</comment>
<dbReference type="EMBL" id="BA000033">
    <property type="protein sequence ID" value="BAB96016.1"/>
    <property type="molecule type" value="Genomic_DNA"/>
</dbReference>
<dbReference type="RefSeq" id="WP_001096577.1">
    <property type="nucleotide sequence ID" value="NC_003923.1"/>
</dbReference>
<dbReference type="PDB" id="8Y36">
    <property type="method" value="EM"/>
    <property type="resolution" value="2.65 A"/>
    <property type="chains" value="X=2-59"/>
</dbReference>
<dbReference type="PDB" id="8Y37">
    <property type="method" value="EM"/>
    <property type="resolution" value="2.53 A"/>
    <property type="chains" value="X=2-59"/>
</dbReference>
<dbReference type="PDB" id="8Y38">
    <property type="method" value="EM"/>
    <property type="resolution" value="2.58 A"/>
    <property type="chains" value="X=2-59"/>
</dbReference>
<dbReference type="PDB" id="8Y39">
    <property type="method" value="EM"/>
    <property type="resolution" value="3.60 A"/>
    <property type="chains" value="X=2-59"/>
</dbReference>
<dbReference type="PDBsum" id="8Y36"/>
<dbReference type="PDBsum" id="8Y37"/>
<dbReference type="PDBsum" id="8Y38"/>
<dbReference type="PDBsum" id="8Y39"/>
<dbReference type="EMDB" id="EMD-38873"/>
<dbReference type="EMDB" id="EMD-38874"/>
<dbReference type="EMDB" id="EMD-38875"/>
<dbReference type="EMDB" id="EMD-38876"/>
<dbReference type="SMR" id="P0A0G1"/>
<dbReference type="KEGG" id="sam:MW2151"/>
<dbReference type="HOGENOM" id="CLU_131047_2_1_9"/>
<dbReference type="GO" id="GO:0022625">
    <property type="term" value="C:cytosolic large ribosomal subunit"/>
    <property type="evidence" value="ECO:0007669"/>
    <property type="project" value="TreeGrafter"/>
</dbReference>
<dbReference type="GO" id="GO:0003735">
    <property type="term" value="F:structural constituent of ribosome"/>
    <property type="evidence" value="ECO:0007669"/>
    <property type="project" value="InterPro"/>
</dbReference>
<dbReference type="GO" id="GO:0006412">
    <property type="term" value="P:translation"/>
    <property type="evidence" value="ECO:0007669"/>
    <property type="project" value="UniProtKB-UniRule"/>
</dbReference>
<dbReference type="CDD" id="cd01658">
    <property type="entry name" value="Ribosomal_L30"/>
    <property type="match status" value="1"/>
</dbReference>
<dbReference type="FunFam" id="3.30.1390.20:FF:000001">
    <property type="entry name" value="50S ribosomal protein L30"/>
    <property type="match status" value="1"/>
</dbReference>
<dbReference type="Gene3D" id="3.30.1390.20">
    <property type="entry name" value="Ribosomal protein L30, ferredoxin-like fold domain"/>
    <property type="match status" value="1"/>
</dbReference>
<dbReference type="HAMAP" id="MF_01371_B">
    <property type="entry name" value="Ribosomal_uL30_B"/>
    <property type="match status" value="1"/>
</dbReference>
<dbReference type="InterPro" id="IPR036919">
    <property type="entry name" value="Ribo_uL30_ferredoxin-like_sf"/>
</dbReference>
<dbReference type="InterPro" id="IPR005996">
    <property type="entry name" value="Ribosomal_uL30_bac-type"/>
</dbReference>
<dbReference type="InterPro" id="IPR016082">
    <property type="entry name" value="Ribosomal_uL30_ferredoxin-like"/>
</dbReference>
<dbReference type="NCBIfam" id="TIGR01308">
    <property type="entry name" value="rpmD_bact"/>
    <property type="match status" value="1"/>
</dbReference>
<dbReference type="PANTHER" id="PTHR15892:SF2">
    <property type="entry name" value="LARGE RIBOSOMAL SUBUNIT PROTEIN UL30M"/>
    <property type="match status" value="1"/>
</dbReference>
<dbReference type="PANTHER" id="PTHR15892">
    <property type="entry name" value="MITOCHONDRIAL RIBOSOMAL PROTEIN L30"/>
    <property type="match status" value="1"/>
</dbReference>
<dbReference type="Pfam" id="PF00327">
    <property type="entry name" value="Ribosomal_L30"/>
    <property type="match status" value="1"/>
</dbReference>
<dbReference type="PIRSF" id="PIRSF002211">
    <property type="entry name" value="Ribosomal_L30_bac-type"/>
    <property type="match status" value="1"/>
</dbReference>
<dbReference type="SUPFAM" id="SSF55129">
    <property type="entry name" value="Ribosomal protein L30p/L7e"/>
    <property type="match status" value="1"/>
</dbReference>
<gene>
    <name evidence="1" type="primary">rpmD</name>
    <name type="ordered locus">MW2151</name>
</gene>
<reference key="1">
    <citation type="journal article" date="2002" name="Lancet">
        <title>Genome and virulence determinants of high virulence community-acquired MRSA.</title>
        <authorList>
            <person name="Baba T."/>
            <person name="Takeuchi F."/>
            <person name="Kuroda M."/>
            <person name="Yuzawa H."/>
            <person name="Aoki K."/>
            <person name="Oguchi A."/>
            <person name="Nagai Y."/>
            <person name="Iwama N."/>
            <person name="Asano K."/>
            <person name="Naimi T."/>
            <person name="Kuroda H."/>
            <person name="Cui L."/>
            <person name="Yamamoto K."/>
            <person name="Hiramatsu K."/>
        </authorList>
    </citation>
    <scope>NUCLEOTIDE SEQUENCE [LARGE SCALE GENOMIC DNA]</scope>
    <source>
        <strain>MW2</strain>
    </source>
</reference>
<feature type="chain" id="PRO_0000104610" description="Large ribosomal subunit protein uL30">
    <location>
        <begin position="1"/>
        <end position="59"/>
    </location>
</feature>